<proteinExistence type="inferred from homology"/>
<sequence length="265" mass="28200">MAEEGAQKATGKIKSVVLILSGKGGVGKSTVASQIALELANGGNKVGILDVDLCGPSIPRVLGLEDKDVHQCADGWIPVYADKNEKLAVMSIGFLLRNSKDAVVWRGPKKNAMIKQFLSDVVWGDLDYLIIDTPPGTSDEHITVAENVRGLNLTGAVMVTTPQAVALGDVRREITFCKKVGIPIVGIVENMSGYTCPNCSECTNIFSKGGGEALAQLTQVPFLGCLPLDPKLTMSIEDGKSFTELYSESPTALAIREIIRPLITS</sequence>
<evidence type="ECO:0000255" key="1">
    <source>
        <dbReference type="HAMAP-Rule" id="MF_03039"/>
    </source>
</evidence>
<reference key="1">
    <citation type="journal article" date="2008" name="Nature">
        <title>The Trichoplax genome and the nature of placozoans.</title>
        <authorList>
            <person name="Srivastava M."/>
            <person name="Begovic E."/>
            <person name="Chapman J."/>
            <person name="Putnam N.H."/>
            <person name="Hellsten U."/>
            <person name="Kawashima T."/>
            <person name="Kuo A."/>
            <person name="Mitros T."/>
            <person name="Salamov A."/>
            <person name="Carpenter M.L."/>
            <person name="Signorovitch A.Y."/>
            <person name="Moreno M.A."/>
            <person name="Kamm K."/>
            <person name="Grimwood J."/>
            <person name="Schmutz J."/>
            <person name="Shapiro H."/>
            <person name="Grigoriev I.V."/>
            <person name="Buss L.W."/>
            <person name="Schierwater B."/>
            <person name="Dellaporta S.L."/>
            <person name="Rokhsar D.S."/>
        </authorList>
    </citation>
    <scope>NUCLEOTIDE SEQUENCE [LARGE SCALE GENOMIC DNA]</scope>
    <source>
        <strain>Grell-BS-1999</strain>
    </source>
</reference>
<feature type="chain" id="PRO_0000382722" description="Cytosolic Fe-S cluster assembly factor NUBP2 homolog">
    <location>
        <begin position="1"/>
        <end position="265"/>
    </location>
</feature>
<feature type="binding site" evidence="1">
    <location>
        <begin position="22"/>
        <end position="29"/>
    </location>
    <ligand>
        <name>ATP</name>
        <dbReference type="ChEBI" id="CHEBI:30616"/>
    </ligand>
</feature>
<feature type="binding site" evidence="1">
    <location>
        <position position="196"/>
    </location>
    <ligand>
        <name>[4Fe-4S] cluster</name>
        <dbReference type="ChEBI" id="CHEBI:49883"/>
        <note>ligand shared between dimeric partners</note>
    </ligand>
</feature>
<feature type="binding site" evidence="1">
    <location>
        <position position="199"/>
    </location>
    <ligand>
        <name>[4Fe-4S] cluster</name>
        <dbReference type="ChEBI" id="CHEBI:49883"/>
        <note>ligand shared between dimeric partners</note>
    </ligand>
</feature>
<comment type="function">
    <text evidence="1">Component of the cytosolic iron-sulfur (Fe/S) protein assembly (CIA) machinery. Required for maturation of extramitochondrial Fe-S proteins. The NUBP1-NUBP2 heterotetramer forms a Fe-S scaffold complex, mediating the de novo assembly of an Fe-S cluster and its transfer to target apoproteins.</text>
</comment>
<comment type="cofactor">
    <cofactor evidence="1">
        <name>[4Fe-4S] cluster</name>
        <dbReference type="ChEBI" id="CHEBI:49883"/>
    </cofactor>
    <text evidence="1">Binds 4 [4Fe-4S] clusters per heterotetramer. Contains two stable clusters in the N-termini of NUBP1 and two labile, bridging clusters between subunits of the NUBP1-NUBP2 heterotetramer.</text>
</comment>
<comment type="subunit">
    <text evidence="1">Heterotetramer of 2 NUBP1 and 2 NUBP2 chains.</text>
</comment>
<comment type="subcellular location">
    <subcellularLocation>
        <location evidence="1">Cytoplasm</location>
    </subcellularLocation>
</comment>
<comment type="similarity">
    <text evidence="1">Belongs to the Mrp/NBP35 ATP-binding proteins family. NUBP2/CFD1 subfamily.</text>
</comment>
<accession>B3RPX4</accession>
<organism>
    <name type="scientific">Trichoplax adhaerens</name>
    <name type="common">Trichoplax reptans</name>
    <dbReference type="NCBI Taxonomy" id="10228"/>
    <lineage>
        <taxon>Eukaryota</taxon>
        <taxon>Metazoa</taxon>
        <taxon>Placozoa</taxon>
        <taxon>Uniplacotomia</taxon>
        <taxon>Trichoplacea</taxon>
        <taxon>Trichoplacidae</taxon>
        <taxon>Trichoplax</taxon>
    </lineage>
</organism>
<name>NUBP2_TRIAD</name>
<gene>
    <name type="ORF">TRIADDRAFT_53697</name>
</gene>
<keyword id="KW-0004">4Fe-4S</keyword>
<keyword id="KW-0067">ATP-binding</keyword>
<keyword id="KW-0963">Cytoplasm</keyword>
<keyword id="KW-0408">Iron</keyword>
<keyword id="KW-0411">Iron-sulfur</keyword>
<keyword id="KW-0479">Metal-binding</keyword>
<keyword id="KW-0547">Nucleotide-binding</keyword>
<keyword id="KW-1185">Reference proteome</keyword>
<dbReference type="EMBL" id="DS985242">
    <property type="protein sequence ID" value="EDV27718.1"/>
    <property type="molecule type" value="Genomic_DNA"/>
</dbReference>
<dbReference type="RefSeq" id="XP_002109552.1">
    <property type="nucleotide sequence ID" value="XM_002109516.1"/>
</dbReference>
<dbReference type="SMR" id="B3RPX4"/>
<dbReference type="FunCoup" id="B3RPX4">
    <property type="interactions" value="652"/>
</dbReference>
<dbReference type="STRING" id="10228.B3RPX4"/>
<dbReference type="EnsemblMetazoa" id="TriadT53697">
    <property type="protein sequence ID" value="TriadP53697"/>
    <property type="gene ID" value="TriadG53697"/>
</dbReference>
<dbReference type="GeneID" id="6751307"/>
<dbReference type="KEGG" id="tad:TRIADDRAFT_53697"/>
<dbReference type="CTD" id="6751307"/>
<dbReference type="eggNOG" id="KOG3022">
    <property type="taxonomic scope" value="Eukaryota"/>
</dbReference>
<dbReference type="HOGENOM" id="CLU_024839_0_1_1"/>
<dbReference type="InParanoid" id="B3RPX4"/>
<dbReference type="OMA" id="WIPVFAD"/>
<dbReference type="OrthoDB" id="1741334at2759"/>
<dbReference type="PhylomeDB" id="B3RPX4"/>
<dbReference type="Proteomes" id="UP000009022">
    <property type="component" value="Unassembled WGS sequence"/>
</dbReference>
<dbReference type="GO" id="GO:0005829">
    <property type="term" value="C:cytosol"/>
    <property type="evidence" value="ECO:0000318"/>
    <property type="project" value="GO_Central"/>
</dbReference>
<dbReference type="GO" id="GO:0051539">
    <property type="term" value="F:4 iron, 4 sulfur cluster binding"/>
    <property type="evidence" value="ECO:0007669"/>
    <property type="project" value="UniProtKB-UniRule"/>
</dbReference>
<dbReference type="GO" id="GO:0005524">
    <property type="term" value="F:ATP binding"/>
    <property type="evidence" value="ECO:0007669"/>
    <property type="project" value="UniProtKB-KW"/>
</dbReference>
<dbReference type="GO" id="GO:0140663">
    <property type="term" value="F:ATP-dependent FeS chaperone activity"/>
    <property type="evidence" value="ECO:0007669"/>
    <property type="project" value="InterPro"/>
</dbReference>
<dbReference type="GO" id="GO:0051536">
    <property type="term" value="F:iron-sulfur cluster binding"/>
    <property type="evidence" value="ECO:0000318"/>
    <property type="project" value="GO_Central"/>
</dbReference>
<dbReference type="GO" id="GO:0046872">
    <property type="term" value="F:metal ion binding"/>
    <property type="evidence" value="ECO:0007669"/>
    <property type="project" value="UniProtKB-KW"/>
</dbReference>
<dbReference type="GO" id="GO:0016226">
    <property type="term" value="P:iron-sulfur cluster assembly"/>
    <property type="evidence" value="ECO:0000318"/>
    <property type="project" value="GO_Central"/>
</dbReference>
<dbReference type="CDD" id="cd02037">
    <property type="entry name" value="Mrp_NBP35"/>
    <property type="match status" value="1"/>
</dbReference>
<dbReference type="FunFam" id="3.40.50.300:FF:000796">
    <property type="entry name" value="Cytosolic Fe-S cluster assembly factor NUBP2"/>
    <property type="match status" value="1"/>
</dbReference>
<dbReference type="Gene3D" id="3.40.50.300">
    <property type="entry name" value="P-loop containing nucleotide triphosphate hydrolases"/>
    <property type="match status" value="1"/>
</dbReference>
<dbReference type="HAMAP" id="MF_02040">
    <property type="entry name" value="Mrp_NBP35"/>
    <property type="match status" value="1"/>
</dbReference>
<dbReference type="HAMAP" id="MF_03039">
    <property type="entry name" value="NUBP2"/>
    <property type="match status" value="1"/>
</dbReference>
<dbReference type="InterPro" id="IPR000808">
    <property type="entry name" value="Mrp-like_CS"/>
</dbReference>
<dbReference type="InterPro" id="IPR019591">
    <property type="entry name" value="Mrp/NBP35_ATP-bd"/>
</dbReference>
<dbReference type="InterPro" id="IPR028600">
    <property type="entry name" value="NUBP2/Cfd1_eukaryotes"/>
</dbReference>
<dbReference type="InterPro" id="IPR027417">
    <property type="entry name" value="P-loop_NTPase"/>
</dbReference>
<dbReference type="InterPro" id="IPR033756">
    <property type="entry name" value="YlxH/NBP35"/>
</dbReference>
<dbReference type="PANTHER" id="PTHR23264:SF19">
    <property type="entry name" value="CYTOSOLIC FE-S CLUSTER ASSEMBLY FACTOR NUBP2"/>
    <property type="match status" value="1"/>
</dbReference>
<dbReference type="PANTHER" id="PTHR23264">
    <property type="entry name" value="NUCLEOTIDE-BINDING PROTEIN NBP35 YEAST -RELATED"/>
    <property type="match status" value="1"/>
</dbReference>
<dbReference type="Pfam" id="PF10609">
    <property type="entry name" value="ParA"/>
    <property type="match status" value="1"/>
</dbReference>
<dbReference type="SUPFAM" id="SSF52540">
    <property type="entry name" value="P-loop containing nucleoside triphosphate hydrolases"/>
    <property type="match status" value="1"/>
</dbReference>
<dbReference type="PROSITE" id="PS01215">
    <property type="entry name" value="MRP"/>
    <property type="match status" value="1"/>
</dbReference>
<protein>
    <recommendedName>
        <fullName evidence="1">Cytosolic Fe-S cluster assembly factor NUBP2 homolog</fullName>
    </recommendedName>
</protein>